<protein>
    <recommendedName>
        <fullName>Mitochondrial dicarboxylate transporter</fullName>
    </recommendedName>
    <alternativeName>
        <fullName>Dicarboxylate carrier 1</fullName>
    </alternativeName>
</protein>
<feature type="chain" id="PRO_0000233004" description="Mitochondrial dicarboxylate transporter">
    <location>
        <begin position="1"/>
        <end position="295"/>
    </location>
</feature>
<feature type="transmembrane region" description="Helical; Name=1" evidence="2">
    <location>
        <begin position="8"/>
        <end position="24"/>
    </location>
</feature>
<feature type="transmembrane region" description="Helical; Name=2" evidence="2">
    <location>
        <begin position="63"/>
        <end position="82"/>
    </location>
</feature>
<feature type="transmembrane region" description="Helical; Name=3" evidence="2">
    <location>
        <begin position="98"/>
        <end position="122"/>
    </location>
</feature>
<feature type="transmembrane region" description="Helical; Name=4" evidence="2">
    <location>
        <begin position="163"/>
        <end position="182"/>
    </location>
</feature>
<feature type="transmembrane region" description="Helical; Name=5" evidence="2">
    <location>
        <begin position="204"/>
        <end position="224"/>
    </location>
</feature>
<feature type="transmembrane region" description="Helical; Name=6" evidence="2">
    <location>
        <begin position="262"/>
        <end position="280"/>
    </location>
</feature>
<feature type="repeat" description="Solcar 1">
    <location>
        <begin position="4"/>
        <end position="88"/>
    </location>
</feature>
<feature type="repeat" description="Solcar 2">
    <location>
        <begin position="96"/>
        <end position="188"/>
    </location>
</feature>
<feature type="repeat" description="Solcar 3">
    <location>
        <begin position="198"/>
        <end position="286"/>
    </location>
</feature>
<gene>
    <name type="primary">DIC1</name>
    <name type="ordered locus">CAGL0G01166g</name>
</gene>
<comment type="function">
    <text evidence="1">Mitochondrial dicarboxylic transporter catalyzing the exchange of dicarboxylic acids like malate and succinate for inorganic phosphate. Required for growth on ethanol and acetate (By similarity).</text>
</comment>
<comment type="subunit">
    <text evidence="1">Homodimer.</text>
</comment>
<comment type="subcellular location">
    <subcellularLocation>
        <location evidence="1">Mitochondrion inner membrane</location>
        <topology evidence="1">Multi-pass membrane protein</topology>
    </subcellularLocation>
</comment>
<comment type="similarity">
    <text evidence="3">Belongs to the mitochondrial carrier (TC 2.A.29) family.</text>
</comment>
<proteinExistence type="inferred from homology"/>
<evidence type="ECO:0000250" key="1"/>
<evidence type="ECO:0000255" key="2"/>
<evidence type="ECO:0000305" key="3"/>
<reference key="1">
    <citation type="journal article" date="2004" name="Nature">
        <title>Genome evolution in yeasts.</title>
        <authorList>
            <person name="Dujon B."/>
            <person name="Sherman D."/>
            <person name="Fischer G."/>
            <person name="Durrens P."/>
            <person name="Casaregola S."/>
            <person name="Lafontaine I."/>
            <person name="de Montigny J."/>
            <person name="Marck C."/>
            <person name="Neuveglise C."/>
            <person name="Talla E."/>
            <person name="Goffard N."/>
            <person name="Frangeul L."/>
            <person name="Aigle M."/>
            <person name="Anthouard V."/>
            <person name="Babour A."/>
            <person name="Barbe V."/>
            <person name="Barnay S."/>
            <person name="Blanchin S."/>
            <person name="Beckerich J.-M."/>
            <person name="Beyne E."/>
            <person name="Bleykasten C."/>
            <person name="Boisrame A."/>
            <person name="Boyer J."/>
            <person name="Cattolico L."/>
            <person name="Confanioleri F."/>
            <person name="de Daruvar A."/>
            <person name="Despons L."/>
            <person name="Fabre E."/>
            <person name="Fairhead C."/>
            <person name="Ferry-Dumazet H."/>
            <person name="Groppi A."/>
            <person name="Hantraye F."/>
            <person name="Hennequin C."/>
            <person name="Jauniaux N."/>
            <person name="Joyet P."/>
            <person name="Kachouri R."/>
            <person name="Kerrest A."/>
            <person name="Koszul R."/>
            <person name="Lemaire M."/>
            <person name="Lesur I."/>
            <person name="Ma L."/>
            <person name="Muller H."/>
            <person name="Nicaud J.-M."/>
            <person name="Nikolski M."/>
            <person name="Oztas S."/>
            <person name="Ozier-Kalogeropoulos O."/>
            <person name="Pellenz S."/>
            <person name="Potier S."/>
            <person name="Richard G.-F."/>
            <person name="Straub M.-L."/>
            <person name="Suleau A."/>
            <person name="Swennen D."/>
            <person name="Tekaia F."/>
            <person name="Wesolowski-Louvel M."/>
            <person name="Westhof E."/>
            <person name="Wirth B."/>
            <person name="Zeniou-Meyer M."/>
            <person name="Zivanovic Y."/>
            <person name="Bolotin-Fukuhara M."/>
            <person name="Thierry A."/>
            <person name="Bouchier C."/>
            <person name="Caudron B."/>
            <person name="Scarpelli C."/>
            <person name="Gaillardin C."/>
            <person name="Weissenbach J."/>
            <person name="Wincker P."/>
            <person name="Souciet J.-L."/>
        </authorList>
    </citation>
    <scope>NUCLEOTIDE SEQUENCE [LARGE SCALE GENOMIC DNA]</scope>
    <source>
        <strain>ATCC 2001 / BCRC 20586 / JCM 3761 / NBRC 0622 / NRRL Y-65 / CBS 138</strain>
    </source>
</reference>
<name>DIC1_CANGA</name>
<keyword id="KW-0050">Antiport</keyword>
<keyword id="KW-0472">Membrane</keyword>
<keyword id="KW-0496">Mitochondrion</keyword>
<keyword id="KW-0999">Mitochondrion inner membrane</keyword>
<keyword id="KW-0592">Phosphate transport</keyword>
<keyword id="KW-1185">Reference proteome</keyword>
<keyword id="KW-0677">Repeat</keyword>
<keyword id="KW-0812">Transmembrane</keyword>
<keyword id="KW-1133">Transmembrane helix</keyword>
<keyword id="KW-0813">Transport</keyword>
<dbReference type="EMBL" id="CR380953">
    <property type="protein sequence ID" value="CAG59339.1"/>
    <property type="molecule type" value="Genomic_DNA"/>
</dbReference>
<dbReference type="RefSeq" id="XP_446412.1">
    <property type="nucleotide sequence ID" value="XM_446412.1"/>
</dbReference>
<dbReference type="SMR" id="Q6FTN2"/>
<dbReference type="FunCoup" id="Q6FTN2">
    <property type="interactions" value="964"/>
</dbReference>
<dbReference type="STRING" id="284593.Q6FTN2"/>
<dbReference type="EnsemblFungi" id="CAGL0G01166g-T">
    <property type="protein sequence ID" value="CAGL0G01166g-T-p1"/>
    <property type="gene ID" value="CAGL0G01166g"/>
</dbReference>
<dbReference type="KEGG" id="cgr:2888386"/>
<dbReference type="CGD" id="CAL0130061">
    <property type="gene designation" value="CAGL0G01166g"/>
</dbReference>
<dbReference type="VEuPathDB" id="FungiDB:B1J91_G01166g"/>
<dbReference type="VEuPathDB" id="FungiDB:CAGL0G01166g"/>
<dbReference type="eggNOG" id="KOG0759">
    <property type="taxonomic scope" value="Eukaryota"/>
</dbReference>
<dbReference type="HOGENOM" id="CLU_015166_14_1_1"/>
<dbReference type="InParanoid" id="Q6FTN2"/>
<dbReference type="Proteomes" id="UP000002428">
    <property type="component" value="Chromosome G"/>
</dbReference>
<dbReference type="GO" id="GO:0005743">
    <property type="term" value="C:mitochondrial inner membrane"/>
    <property type="evidence" value="ECO:0007669"/>
    <property type="project" value="UniProtKB-SubCell"/>
</dbReference>
<dbReference type="GO" id="GO:0015297">
    <property type="term" value="F:antiporter activity"/>
    <property type="evidence" value="ECO:0007669"/>
    <property type="project" value="UniProtKB-KW"/>
</dbReference>
<dbReference type="GO" id="GO:0005310">
    <property type="term" value="F:dicarboxylic acid transmembrane transporter activity"/>
    <property type="evidence" value="ECO:0007669"/>
    <property type="project" value="EnsemblFungi"/>
</dbReference>
<dbReference type="GO" id="GO:0006817">
    <property type="term" value="P:phosphate ion transport"/>
    <property type="evidence" value="ECO:0007669"/>
    <property type="project" value="UniProtKB-KW"/>
</dbReference>
<dbReference type="Gene3D" id="1.50.40.10">
    <property type="entry name" value="Mitochondrial carrier domain"/>
    <property type="match status" value="1"/>
</dbReference>
<dbReference type="InterPro" id="IPR050391">
    <property type="entry name" value="Mito_Metabolite_Transporter"/>
</dbReference>
<dbReference type="InterPro" id="IPR018108">
    <property type="entry name" value="Mitochondrial_sb/sol_carrier"/>
</dbReference>
<dbReference type="InterPro" id="IPR023395">
    <property type="entry name" value="Mt_carrier_dom_sf"/>
</dbReference>
<dbReference type="PANTHER" id="PTHR45618">
    <property type="entry name" value="MITOCHONDRIAL DICARBOXYLATE CARRIER-RELATED"/>
    <property type="match status" value="1"/>
</dbReference>
<dbReference type="Pfam" id="PF00153">
    <property type="entry name" value="Mito_carr"/>
    <property type="match status" value="3"/>
</dbReference>
<dbReference type="SUPFAM" id="SSF103506">
    <property type="entry name" value="Mitochondrial carrier"/>
    <property type="match status" value="1"/>
</dbReference>
<dbReference type="PROSITE" id="PS50920">
    <property type="entry name" value="SOLCAR"/>
    <property type="match status" value="3"/>
</dbReference>
<accession>Q6FTN2</accession>
<sequence>MSEKQVKYPWWYGGAAGIFAVMNTHPLDLTKVRLQAAPIPKPTIVQMLRSILKNEGIVGLYAGLSASLLRQCTYTTARFGMYDALKEHVIPRDKLTNMWYLLGASMVSGALGGLAGNFADLINIRMQNDSALPLDKRRNYKNAIDGMVKIYKAEGAKSLFLTGWKPNMVRGVLMTASQVVTYDMFKNFLVTKYNMDPKKNSTHLTSSLLAGFVATTVCSPADVIKTIVMNAHKKPGHNHDSSFKILMEAINKEGPSFMFRGWVPSFTRLAPFTMLIFFAMEQLKKYRVGMPKEEA</sequence>
<organism>
    <name type="scientific">Candida glabrata (strain ATCC 2001 / BCRC 20586 / JCM 3761 / NBRC 0622 / NRRL Y-65 / CBS 138)</name>
    <name type="common">Yeast</name>
    <name type="synonym">Nakaseomyces glabratus</name>
    <dbReference type="NCBI Taxonomy" id="284593"/>
    <lineage>
        <taxon>Eukaryota</taxon>
        <taxon>Fungi</taxon>
        <taxon>Dikarya</taxon>
        <taxon>Ascomycota</taxon>
        <taxon>Saccharomycotina</taxon>
        <taxon>Saccharomycetes</taxon>
        <taxon>Saccharomycetales</taxon>
        <taxon>Saccharomycetaceae</taxon>
        <taxon>Nakaseomyces</taxon>
    </lineage>
</organism>